<dbReference type="EC" id="6.3.2.-" evidence="11"/>
<dbReference type="EC" id="6.3.2.40" evidence="3"/>
<dbReference type="EMBL" id="KX528209">
    <property type="protein sequence ID" value="ANY57892.1"/>
    <property type="molecule type" value="Genomic_DNA"/>
</dbReference>
<dbReference type="SMR" id="A0A1B2CTC5"/>
<dbReference type="GO" id="GO:0005737">
    <property type="term" value="C:cytoplasm"/>
    <property type="evidence" value="ECO:0007669"/>
    <property type="project" value="TreeGrafter"/>
</dbReference>
<dbReference type="GO" id="GO:0016874">
    <property type="term" value="F:ligase activity"/>
    <property type="evidence" value="ECO:0007669"/>
    <property type="project" value="UniProtKB-KW"/>
</dbReference>
<dbReference type="GO" id="GO:0031177">
    <property type="term" value="F:phosphopantetheine binding"/>
    <property type="evidence" value="ECO:0007669"/>
    <property type="project" value="InterPro"/>
</dbReference>
<dbReference type="GO" id="GO:0043041">
    <property type="term" value="P:amino acid activation for nonribosomal peptide biosynthetic process"/>
    <property type="evidence" value="ECO:0007669"/>
    <property type="project" value="TreeGrafter"/>
</dbReference>
<dbReference type="GO" id="GO:0017000">
    <property type="term" value="P:antibiotic biosynthetic process"/>
    <property type="evidence" value="ECO:0007669"/>
    <property type="project" value="UniProtKB-ARBA"/>
</dbReference>
<dbReference type="GO" id="GO:0072330">
    <property type="term" value="P:monocarboxylic acid biosynthetic process"/>
    <property type="evidence" value="ECO:0007669"/>
    <property type="project" value="UniProtKB-ARBA"/>
</dbReference>
<dbReference type="GO" id="GO:0009403">
    <property type="term" value="P:toxin biosynthetic process"/>
    <property type="evidence" value="ECO:0007669"/>
    <property type="project" value="UniProtKB-ARBA"/>
</dbReference>
<dbReference type="CDD" id="cd05930">
    <property type="entry name" value="A_NRPS"/>
    <property type="match status" value="1"/>
</dbReference>
<dbReference type="CDD" id="cd05918">
    <property type="entry name" value="A_NRPS_SidN3_like"/>
    <property type="match status" value="1"/>
</dbReference>
<dbReference type="CDD" id="cd02440">
    <property type="entry name" value="AdoMet_MTases"/>
    <property type="match status" value="1"/>
</dbReference>
<dbReference type="CDD" id="cd19531">
    <property type="entry name" value="LCL_NRPS-like"/>
    <property type="match status" value="1"/>
</dbReference>
<dbReference type="FunFam" id="3.30.300.30:FF:000015">
    <property type="entry name" value="Nonribosomal peptide synthase SidD"/>
    <property type="match status" value="1"/>
</dbReference>
<dbReference type="Gene3D" id="3.30.300.30">
    <property type="match status" value="3"/>
</dbReference>
<dbReference type="Gene3D" id="1.10.1200.10">
    <property type="entry name" value="ACP-like"/>
    <property type="match status" value="1"/>
</dbReference>
<dbReference type="Gene3D" id="3.40.50.1820">
    <property type="entry name" value="alpha/beta hydrolase"/>
    <property type="match status" value="1"/>
</dbReference>
<dbReference type="Gene3D" id="3.30.559.10">
    <property type="entry name" value="Chloramphenicol acetyltransferase-like domain"/>
    <property type="match status" value="2"/>
</dbReference>
<dbReference type="Gene3D" id="3.40.50.12780">
    <property type="entry name" value="N-terminal domain of ligase-like"/>
    <property type="match status" value="2"/>
</dbReference>
<dbReference type="Gene3D" id="3.30.559.30">
    <property type="entry name" value="Nonribosomal peptide synthetase, condensation domain"/>
    <property type="match status" value="3"/>
</dbReference>
<dbReference type="Gene3D" id="3.40.50.150">
    <property type="entry name" value="Vaccinia Virus protein VP39"/>
    <property type="match status" value="1"/>
</dbReference>
<dbReference type="InterPro" id="IPR010071">
    <property type="entry name" value="AA_adenyl_dom"/>
</dbReference>
<dbReference type="InterPro" id="IPR029058">
    <property type="entry name" value="AB_hydrolase_fold"/>
</dbReference>
<dbReference type="InterPro" id="IPR036736">
    <property type="entry name" value="ACP-like_sf"/>
</dbReference>
<dbReference type="InterPro" id="IPR045851">
    <property type="entry name" value="AMP-bd_C_sf"/>
</dbReference>
<dbReference type="InterPro" id="IPR020845">
    <property type="entry name" value="AMP-binding_CS"/>
</dbReference>
<dbReference type="InterPro" id="IPR000873">
    <property type="entry name" value="AMP-dep_synth/lig_dom"/>
</dbReference>
<dbReference type="InterPro" id="IPR042099">
    <property type="entry name" value="ANL_N_sf"/>
</dbReference>
<dbReference type="InterPro" id="IPR023213">
    <property type="entry name" value="CAT-like_dom_sf"/>
</dbReference>
<dbReference type="InterPro" id="IPR001242">
    <property type="entry name" value="Condensatn"/>
</dbReference>
<dbReference type="InterPro" id="IPR013217">
    <property type="entry name" value="Methyltransf_12"/>
</dbReference>
<dbReference type="InterPro" id="IPR020806">
    <property type="entry name" value="PKS_PP-bd"/>
</dbReference>
<dbReference type="InterPro" id="IPR009081">
    <property type="entry name" value="PP-bd_ACP"/>
</dbReference>
<dbReference type="InterPro" id="IPR006162">
    <property type="entry name" value="Ppantetheine_attach_site"/>
</dbReference>
<dbReference type="InterPro" id="IPR029063">
    <property type="entry name" value="SAM-dependent_MTases_sf"/>
</dbReference>
<dbReference type="NCBIfam" id="TIGR01733">
    <property type="entry name" value="AA-adenyl-dom"/>
    <property type="match status" value="2"/>
</dbReference>
<dbReference type="PANTHER" id="PTHR45527:SF1">
    <property type="entry name" value="FATTY ACID SYNTHASE"/>
    <property type="match status" value="1"/>
</dbReference>
<dbReference type="PANTHER" id="PTHR45527">
    <property type="entry name" value="NONRIBOSOMAL PEPTIDE SYNTHETASE"/>
    <property type="match status" value="1"/>
</dbReference>
<dbReference type="Pfam" id="PF00501">
    <property type="entry name" value="AMP-binding"/>
    <property type="match status" value="2"/>
</dbReference>
<dbReference type="Pfam" id="PF00668">
    <property type="entry name" value="Condensation"/>
    <property type="match status" value="2"/>
</dbReference>
<dbReference type="Pfam" id="PF08242">
    <property type="entry name" value="Methyltransf_12"/>
    <property type="match status" value="1"/>
</dbReference>
<dbReference type="Pfam" id="PF00550">
    <property type="entry name" value="PP-binding"/>
    <property type="match status" value="2"/>
</dbReference>
<dbReference type="SMART" id="SM00823">
    <property type="entry name" value="PKS_PP"/>
    <property type="match status" value="2"/>
</dbReference>
<dbReference type="SUPFAM" id="SSF56801">
    <property type="entry name" value="Acetyl-CoA synthetase-like"/>
    <property type="match status" value="2"/>
</dbReference>
<dbReference type="SUPFAM" id="SSF47336">
    <property type="entry name" value="ACP-like"/>
    <property type="match status" value="2"/>
</dbReference>
<dbReference type="SUPFAM" id="SSF52777">
    <property type="entry name" value="CoA-dependent acyltransferases"/>
    <property type="match status" value="5"/>
</dbReference>
<dbReference type="SUPFAM" id="SSF53335">
    <property type="entry name" value="S-adenosyl-L-methionine-dependent methyltransferases"/>
    <property type="match status" value="1"/>
</dbReference>
<dbReference type="PROSITE" id="PS00455">
    <property type="entry name" value="AMP_BINDING"/>
    <property type="match status" value="2"/>
</dbReference>
<dbReference type="PROSITE" id="PS50075">
    <property type="entry name" value="CARRIER"/>
    <property type="match status" value="2"/>
</dbReference>
<dbReference type="PROSITE" id="PS00012">
    <property type="entry name" value="PHOSPHOPANTETHEINE"/>
    <property type="match status" value="1"/>
</dbReference>
<reference key="1">
    <citation type="journal article" date="2015" name="J. Am. Chem. Soc.">
        <title>Tandem prenyltransferases catalyze isoprenoid elongation and complexity generation in biosynthesis of quinolone alkaloids.</title>
        <authorList>
            <person name="Zou Y."/>
            <person name="Zhan Z."/>
            <person name="Li D."/>
            <person name="Tang M."/>
            <person name="Cacho R.A."/>
            <person name="Watanabe K."/>
            <person name="Tang Y."/>
        </authorList>
    </citation>
    <scope>NUCLEOTIDE SEQUENCE [GENOMIC DNA]</scope>
    <scope>FUNCTION</scope>
    <scope>DISRUPTION PHENOTYPE</scope>
    <scope>PATHWAY</scope>
    <source>
        <strain>IBT 5891 / CBS 111225</strain>
    </source>
</reference>
<reference key="2">
    <citation type="journal article" date="2017" name="Nat. Chem. Biol.">
        <title>Enzyme-catalyzed cationic epoxide rearrangements in quinolone alkaloid biosynthesis.</title>
        <authorList>
            <person name="Zou Y."/>
            <person name="Garcia-Borras M."/>
            <person name="Tang M.C."/>
            <person name="Hirayama Y."/>
            <person name="Li D.H."/>
            <person name="Li L."/>
            <person name="Watanabe K."/>
            <person name="Houk K.N."/>
            <person name="Tang Y."/>
        </authorList>
    </citation>
    <scope>FUNCTION</scope>
</reference>
<evidence type="ECO:0000250" key="1">
    <source>
        <dbReference type="UniProtKB" id="C8VJQ3"/>
    </source>
</evidence>
<evidence type="ECO:0000250" key="2">
    <source>
        <dbReference type="UniProtKB" id="Q5AR53"/>
    </source>
</evidence>
<evidence type="ECO:0000250" key="3">
    <source>
        <dbReference type="UniProtKB" id="Q5AR54"/>
    </source>
</evidence>
<evidence type="ECO:0000255" key="4"/>
<evidence type="ECO:0000255" key="5">
    <source>
        <dbReference type="PROSITE-ProRule" id="PRU00258"/>
    </source>
</evidence>
<evidence type="ECO:0000256" key="6">
    <source>
        <dbReference type="SAM" id="MobiDB-lite"/>
    </source>
</evidence>
<evidence type="ECO:0000269" key="7">
    <source>
    </source>
</evidence>
<evidence type="ECO:0000269" key="8">
    <source>
    </source>
</evidence>
<evidence type="ECO:0000303" key="9">
    <source>
    </source>
</evidence>
<evidence type="ECO:0000305" key="10"/>
<evidence type="ECO:0000305" key="11">
    <source>
    </source>
</evidence>
<protein>
    <recommendedName>
        <fullName evidence="9">Nonribosomal peptide synthetase penN</fullName>
        <shortName evidence="9">NRPS penM</shortName>
        <ecNumber evidence="11">6.3.2.-</ecNumber>
        <ecNumber evidence="3">6.3.2.40</ecNumber>
    </recommendedName>
    <alternativeName>
        <fullName evidence="9">Penigequinolones biosynthesis cluster protein N</fullName>
    </alternativeName>
</protein>
<name>PENN_PENTH</name>
<feature type="chain" id="PRO_0000455370" description="Nonribosomal peptide synthetase penN">
    <location>
        <begin position="1"/>
        <end position="2797"/>
    </location>
</feature>
<feature type="domain" description="Carrier 1" evidence="5">
    <location>
        <begin position="751"/>
        <end position="824"/>
    </location>
</feature>
<feature type="domain" description="Carrier 2" evidence="5">
    <location>
        <begin position="2277"/>
        <end position="2351"/>
    </location>
</feature>
<feature type="region of interest" description="Adenylation 1" evidence="4">
    <location>
        <begin position="239"/>
        <end position="625"/>
    </location>
</feature>
<feature type="region of interest" description="Disordered" evidence="6">
    <location>
        <begin position="830"/>
        <end position="856"/>
    </location>
</feature>
<feature type="region of interest" description="Condensation 1" evidence="4">
    <location>
        <begin position="870"/>
        <end position="1299"/>
    </location>
</feature>
<feature type="region of interest" description="Adenylation 2" evidence="4">
    <location>
        <begin position="1328"/>
        <end position="1731"/>
    </location>
</feature>
<feature type="region of interest" description="Methyltransferase" evidence="4">
    <location>
        <begin position="1857"/>
        <end position="1953"/>
    </location>
</feature>
<feature type="region of interest" description="Condensation 2" evidence="4">
    <location>
        <begin position="2516"/>
        <end position="2658"/>
    </location>
</feature>
<feature type="modified residue" description="O-(pantetheine 4'-phosphoryl)serine" evidence="5">
    <location>
        <position position="785"/>
    </location>
</feature>
<feature type="modified residue" description="O-(pantetheine 4'-phosphoryl)serine" evidence="5">
    <location>
        <position position="2311"/>
    </location>
</feature>
<gene>
    <name evidence="9" type="primary">penN</name>
</gene>
<proteinExistence type="inferred from homology"/>
<organism>
    <name type="scientific">Penicillium thymicola</name>
    <dbReference type="NCBI Taxonomy" id="293382"/>
    <lineage>
        <taxon>Eukaryota</taxon>
        <taxon>Fungi</taxon>
        <taxon>Dikarya</taxon>
        <taxon>Ascomycota</taxon>
        <taxon>Pezizomycotina</taxon>
        <taxon>Eurotiomycetes</taxon>
        <taxon>Eurotiomycetidae</taxon>
        <taxon>Eurotiales</taxon>
        <taxon>Aspergillaceae</taxon>
        <taxon>Penicillium</taxon>
    </lineage>
</organism>
<accession>A0A1B2CTC5</accession>
<sequence>MYHQLESHGVFPTLGDDAAKLVRTTHVQEIAFTPISEIQRFCEAQNISCDSFYLNVWSLVLRAFAETNSVCVGFGDFRPSGARLDQALFKILQTTLSPKSSILSILQGFKQDERAFSVNHREPAHNTGVVFISEASGPLDLASLGKLKYDLLMVVSFDSKSIPISLFLVYRPSTLSQSHAENLSSNITQAMQQVLARPNSFVNDVELFSTFNKSLVLCWNGLERKAASLLEVIQGHVRSRPDHPAICAWDGTISYSQLDMLTTQWASYLQSRGVQPGCLVPIMMEHSKWAIIGEIAILKAGAAFVPIDPAHPVSRLKGIVQRTKANIAVSSGHLIDKLSSLVDTVVEISDQTTSGLPEAVRHGAANPVPFDRTAYVLFTSGSTGQPKGCVVSYRALSDVVHQTTALNIDSESRVLQFASYTYGMSLIEVHCTLAAGATICIPSDYHRLNALSSAIQSTQVTWAILTASTTLTIAETARYLRTLVVAGEPMGIDHVRSLADKVELLQAFGLTEWGGICCVSQRIRSEGDVRLIGRSPTANLWLIDPTDGSKLAPVGAAAELFVEGPALADGYLEDPHQTAAVFIKRPPWIPAPTGVRLYRTGDLVRYTGDGNLLYIARKDSQVKIRGMRVELGEVEYQIRQAFPALGEAIAVATTTKESSGMPILAAFLHMENQLDLSGQSFSHMIDTIKTSLRKTLPDYMWPSIYIPLDSVPLTISRKIDRKDLQLRVQKSTRMELEENQVSSACIVAPLTDTERHVHRFVAELLHLDPLSFGMNQNFINLGGDSVSAMRLVNKCKYQGYRVTVGEILEVRTLSDIVSLVRTATTSSSVPSAGAEISRSDAPTESPATGSFEGSGYTTIPRLSQSGPIEQSFSQARMWFLEELHPGSSWYILPYATRLQGPLQLDHLEAALSALSERHETLRTTFESRDGTGLQIVAPFRPKPLEVIEVTSDSSIAALRTALQEQMKPFDLTKDTWRSAVLRLSPTDHVFSVVFHHIISDGWSVDVFMKTLETFYSAVIRGQPPLHITKPLQIQYRDFSIWQRQEQSRIHQKQIAYWIQQLHGSKPAEFLCDKPRPTKPSIAAGSMDVKIDGELYQALQGFCRSRQVTPFTTLLAAFRTTHYRLTGASDATIGIPSASRTRPELEELIGYFGNVQCIRTVIDSRGQSFQQLVQQVQSATTAASQNQDVPFDQVVSRLLKDRDMSRHPLVQVTFVLHPQANFGQLHLEGLRAEHLHLPQVTRLDLEFHLYPGDGCLQGDILYSADLFNPETIRTLRSVFYDVLSEGLCHPDIEIGSLLLTDAYPVLDQRGLIYTAHEAPFQGCSIIDMFHQQVAAHGDQMAIKDTHTQLTYCELDRRSDMLATWLKNSFLFVEETPVGVFGNRSCESIVTILGILKAGLAYVPLDADAPPQRTEMILSCLPSCQLVLLLSGLMAPPTLPSNIKFAYVSNSSDVKVEEVDAFLTHTPTPRATNLAYIVFTSGTTGTPKGVMVEHRGVVRLAKDPEIVAHTRDFKVASHVLNPAFDASGFEVYATLLNGGTLVCIDKNIVWDYAALGATLVKHGVQRAFFTTAVLKQCLLSAPYIMSDLEILYVGGDKLDPHDMAVARRFGKVRIFNVYGPTENSVVSTRYAIPDGEAAVNGMPIGRSIAGSGAYVMDPNLRLVPIGAMGELVVTGLGLARGYTNPEQNIGRFVTVSIGGQVVHAYRTGDMVRYRPSDAQLEFFGRMDQQVKIRGYRVELAEIDNALALNSLVSSAVTVLQTQEDQEQELVSFVTIQDTAANVENLEEHISNAHVNSWKDHAEGGDHYGKLGAVDPATLGRDFLGWVSMYDGEAIDTEVMTEWLEDTIAAIHLCDAASALEIGTGTGMILFNLIDSLKEYYGLEPSRQAVEFVQRAVRCVPKAASKVRIQQGTASALVGLKATGPIDLAVVNSVAQYFPSAKYMTRVIKQLIQLHDLNCIFFGDIRSYGLYEEFQASKVLHLYGHTLSAREFSQKMAEIVQLEKELLIDPAFFTALATEFPELIEHVEIMPKRMKTTNELSCYRYTAILHIRRPSQSLLVHEVEQSSWLDFEASGLDYRSLTQMLKTSNDVSVLAFSNIPFKKTIMERHVVNFLRHLPTGAGSAGWSMDVCQQALVCPAIDATELIDVAQLTGWQVEISWARQHSQFGGLDAIFHRLKPEDNGSRVFFQFPTDHGRRGLSCAFSNDPLALQRNQRIENELLENLRARLPSYMVPKRIRVLDRMPINNIGKVDRQALAKRVDIPPPAGVLTARSSPRNDMSFTDDIERAMWEEFAGVLGVEVGIADSFFDCGGHSLMAIKLVSRINKRLQSTVPVSDLFQYPSVSRLAGRVRGFRAPSNSTVSYQPFSLLPGSLSRLPYIDSPYGSEPHLPPSTEIIDMLPVTESQAWFLADWSLVSHSFRIEGALDVDGLRAACQAVVRHHATLRTVFTKLLGRLVQVVCGSVDAPFAHVYTDGDLESECRSLCAADGGAPSGLTTGFTLLSRSTIEHIFILRFSHAQYDGISLSSILSDLAAAYAGTAPLPTTAPFSGYVHVAALSRSVALDFWKKYLEGSVLTTLRPSNTAINARVVDLTREAVGKLHQLADITFPTIVNAAIAITLASLVKRNDVTFACVMSSRGVLSQGADSVQGPCVNRTLIRVQLSPDSTALGFCRGLRKNQARVSAENHLELGDVLENCTSWSSSDRLAPWITHLPADKATSTLALPGACITYRSTDVRINPRNQILVRSVITDQQQACIQVQVSSTVMDGSYAFSLASKILNTAQALSMSAERTLSSIDVHE</sequence>
<comment type="function">
    <text evidence="1 2 3 7 8 11">Nonribosomal peptide synthetase; part of the gene cluster that mediates the biosynthesis of penigequinolones, potent insecticidal alkaloids that contain a highly modified 10-carbon prenyl group (PubMed:25859931). The first stage is catalyzed by the nonribosomal peptide synthetase penN that condenses anthranilic acid and O-methyl-L-tyrosine to produce 4'-methoxycyclopeptin (By similarity). 4'-methoxycyclopeptin is then converted to 4'-methoxydehydrocyclopeptin by the ketoglutarate-dependent dioxygenase penM through dehydrogenation to form a double bond between C-alpha and C-beta of the O-methyltyrosine side chain (By similarity). PenM also converts its first product methoxydehydrocyclopeptin to 4'-methoxycyclopenin (By similarity). The following conversion of 4'methoxycyclopenin into 4'-methoxyviridicatin is catalyzed by the cyclopenase penL (By similarity). 4'-methoxyviridicatin is the precursor of quinolone natural products, and is further converted to quinolinone B (Probable). The prenyltransferase penI then catalyzes the canonical Friedel-Crafts alkylation of quinolinone B with dimethylallyl cation to yield dimethylallyl quinolone, which is subjected to FAD-dependent dehydrogenation by the FAD-linked oxidoreductase penH to yield conjugated aryl diene (PubMed:25859931). The delta(3') double bond then serves as the site of the second alkylation with DMAPP catalyzed by the prenyltransferase penG to yield a carbenium ion intermediate, which can be attacked by H(2)O to yield a styrenyl quinolone containing a C3'-hydroxyprenyl chain, or undergo cyclization to yield yaequinolones J1 and J2 (PubMed:25859931). The conversion of the styrenyl quinolone into the tetrahydrofuran-containing yaequinolone C is performed by the FAD-dependent monooxygenase penE and involves epoxidation of the terminal C7'-C8' olefin, followed by epoxide ring opening initiated by the C3' hydroxyl group (PubMed:25859931). The predicted cysteine hydrolase penJ acts as an epoxide hydrolase that enhances the rate of the 5-exo-tet cyclization step, increasing the yield of yaequinolone C (PubMed:25859931, PubMed:28114276). PenF catalyzes the cationic rearrangement of the epoxide formed by penE (before ring opening to produce yaequinolone C) into yaequinolone D (PubMed:28114276). Finally, the short-chain dehydrogenase/reductase (SDR)-like reductase penD, catalyzes both the dehydration of yaequinolone D and the reduction of the resulting oxonium to yield penigequinolone (PubMed:28114276).</text>
</comment>
<comment type="catalytic activity">
    <reaction evidence="3">
        <text>O-methyl-L-tyrosine + anthranilate + S-adenosyl-L-methionine + 2 ATP = (-)-4'-methoxycyclopeptine + 2 AMP + S-adenosyl-L-homocysteine + 2 diphosphate + 2 H(+)</text>
        <dbReference type="Rhea" id="RHEA:74487"/>
        <dbReference type="ChEBI" id="CHEBI:15378"/>
        <dbReference type="ChEBI" id="CHEBI:16567"/>
        <dbReference type="ChEBI" id="CHEBI:30616"/>
        <dbReference type="ChEBI" id="CHEBI:33019"/>
        <dbReference type="ChEBI" id="CHEBI:57856"/>
        <dbReference type="ChEBI" id="CHEBI:59789"/>
        <dbReference type="ChEBI" id="CHEBI:193537"/>
        <dbReference type="ChEBI" id="CHEBI:193554"/>
        <dbReference type="ChEBI" id="CHEBI:456215"/>
    </reaction>
    <physiologicalReaction direction="left-to-right" evidence="3">
        <dbReference type="Rhea" id="RHEA:74488"/>
    </physiologicalReaction>
</comment>
<comment type="catalytic activity">
    <reaction evidence="3">
        <text>anthranilate + L-phenylalanine + S-adenosyl-L-methionine + 2 ATP = cyclopeptine + 2 AMP + S-adenosyl-L-homocysteine + 2 diphosphate + 2 H(+)</text>
        <dbReference type="Rhea" id="RHEA:35091"/>
        <dbReference type="ChEBI" id="CHEBI:15378"/>
        <dbReference type="ChEBI" id="CHEBI:16567"/>
        <dbReference type="ChEBI" id="CHEBI:30616"/>
        <dbReference type="ChEBI" id="CHEBI:33019"/>
        <dbReference type="ChEBI" id="CHEBI:57856"/>
        <dbReference type="ChEBI" id="CHEBI:58095"/>
        <dbReference type="ChEBI" id="CHEBI:59789"/>
        <dbReference type="ChEBI" id="CHEBI:71320"/>
        <dbReference type="ChEBI" id="CHEBI:456215"/>
        <dbReference type="EC" id="6.3.2.40"/>
    </reaction>
    <physiologicalReaction direction="left-to-right" evidence="3">
        <dbReference type="Rhea" id="RHEA:35092"/>
    </physiologicalReaction>
</comment>
<comment type="pathway">
    <text evidence="7">Secondary metabolite biosynthesis.</text>
</comment>
<comment type="pathway">
    <text evidence="7">Alkaloid biosynthesis.</text>
</comment>
<comment type="pathway">
    <text evidence="7">Mycotoxin biosynthesis.</text>
</comment>
<comment type="domain">
    <text evidence="11">NRP synthetases are composed of discrete domains (adenylation (A), thiolation (T) or peptidyl carrier protein (PCP) and condensation (C) domains) which when grouped together are referred to as a single module. Each module is responsible for the recognition (via the A domain) and incorporation of a single amino acid into the growing peptide product. Thus, an NRP synthetase is generally composed of one or more modules and can terminate in a thioesterase domain (TE) that releases the newly synthesized peptide from the enzyme. Occasionally, methyltransferase domains (responsible for amino acid methylation) are present within the NRP synthetase. PenN has the following architecture:A-T-C-A-M-T-C.</text>
</comment>
<comment type="disruption phenotype">
    <text evidence="7">Abolishes the production of penigequinolones A and B.</text>
</comment>
<comment type="similarity">
    <text evidence="10">Belongs to the NRP synthetase family.</text>
</comment>
<keyword id="KW-0436">Ligase</keyword>
<keyword id="KW-0596">Phosphopantetheine</keyword>
<keyword id="KW-0597">Phosphoprotein</keyword>
<keyword id="KW-0677">Repeat</keyword>